<comment type="function">
    <text evidence="1">Glycosyltransferase required for the biosynthesis of heparan-sulfate.</text>
</comment>
<comment type="catalytic activity">
    <reaction>
        <text>3-O-{[(1-&gt;4)-beta-D-GlcA-(1-&gt;4)-alpha-D-GlcNAc](n)-(1-&gt;4)-beta-D-GlcA-(1-&gt;3)-beta-D-Gal-(1-&gt;3)-beta-D-Gal-(1-&gt;4)-beta-D-Xyl}-L-seryl-[protein] + UDP-N-acetyl-alpha-D-glucosamine = 3-O-{alpha-D-GlcNAc-[(1-&gt;4)-beta-D-GlcA-(1-&gt;4)-alpha-D-GlcNAc](n)-(1-&gt;4)-beta-D-GlcA-(1-&gt;3)-beta-D-Gal-(1-&gt;3)-beta-D-Gal-(1-&gt;4)-beta-D-Xyl}-L-seryl-[protein] + UDP + H(+)</text>
        <dbReference type="Rhea" id="RHEA:16213"/>
        <dbReference type="Rhea" id="RHEA-COMP:12621"/>
        <dbReference type="Rhea" id="RHEA-COMP:12623"/>
        <dbReference type="ChEBI" id="CHEBI:15378"/>
        <dbReference type="ChEBI" id="CHEBI:57705"/>
        <dbReference type="ChEBI" id="CHEBI:58223"/>
        <dbReference type="ChEBI" id="CHEBI:132415"/>
        <dbReference type="ChEBI" id="CHEBI:132416"/>
        <dbReference type="EC" id="2.4.1.224"/>
    </reaction>
</comment>
<comment type="catalytic activity">
    <reaction>
        <text>3-O-{alpha-D-GlcNAc-[(1-&gt;4)-beta-D-GlcA-(1-&gt;4)-alpha-D-GlcNAc](n)-(1-&gt;4)-beta-D-GlcA-(1-&gt;3)-beta-D-Gal-(1-&gt;3)-beta-D-Gal-(1-&gt;4)-beta-D-Xyl}-L-seryl-[protein] + UDP-alpha-D-glucuronate = 3-O-{[(1-&gt;4)-beta-D-GlcA-(1-&gt;4)-alpha-D-GlcNAc](n+1)-(1-&gt;4)-beta-D-GlcA-(1-&gt;3)-beta-D-Gal-(1-&gt;3)-beta-D-Gal-(1-&gt;4)-beta-D-Xyl}-L-seryl-[protein] + UDP + H(+)</text>
        <dbReference type="Rhea" id="RHEA:20908"/>
        <dbReference type="Rhea" id="RHEA-COMP:12623"/>
        <dbReference type="Rhea" id="RHEA-COMP:14295"/>
        <dbReference type="ChEBI" id="CHEBI:15378"/>
        <dbReference type="ChEBI" id="CHEBI:58052"/>
        <dbReference type="ChEBI" id="CHEBI:58223"/>
        <dbReference type="ChEBI" id="CHEBI:132415"/>
        <dbReference type="ChEBI" id="CHEBI:132416"/>
        <dbReference type="EC" id="2.4.1.225"/>
    </reaction>
</comment>
<comment type="cofactor">
    <cofactor evidence="2">
        <name>Mn(2+)</name>
        <dbReference type="ChEBI" id="CHEBI:29035"/>
    </cofactor>
</comment>
<comment type="pathway">
    <text>Protein modification; protein glycosylation.</text>
</comment>
<comment type="subcellular location">
    <subcellularLocation>
        <location evidence="1">Endoplasmic reticulum membrane</location>
        <topology evidence="1">Single-pass type II membrane protein</topology>
    </subcellularLocation>
</comment>
<comment type="developmental stage">
    <text evidence="4">Expressed zygotically. First detected at the beginning of somatogenesis. At the 16-somite stage, restricted to posterior adaxial cells and, in the anterior, to cells adjacent to the neural tube and to ventromedial reigons of the somites. At 24 hours-post-fertilization (hpf), expressed in the ventral rhombomeres, telencephalon and olfactory bulbs. At 48 hpf, expressed in the brain, retina and fin buds.</text>
</comment>
<comment type="similarity">
    <text evidence="5">Belongs to the glycosyltransferase 47 family.</text>
</comment>
<feature type="chain" id="PRO_0000149661" description="Exostosin-1c">
    <location>
        <begin position="1"/>
        <end position="737"/>
    </location>
</feature>
<feature type="topological domain" description="Cytoplasmic" evidence="3">
    <location>
        <begin position="1"/>
        <end position="6"/>
    </location>
</feature>
<feature type="transmembrane region" description="Helical; Signal-anchor for type II membrane protein" evidence="3">
    <location>
        <begin position="7"/>
        <end position="27"/>
    </location>
</feature>
<feature type="topological domain" description="Lumenal" evidence="3">
    <location>
        <begin position="28"/>
        <end position="737"/>
    </location>
</feature>
<feature type="active site" evidence="2">
    <location>
        <position position="645"/>
    </location>
</feature>
<feature type="binding site" evidence="2">
    <location>
        <position position="432"/>
    </location>
    <ligand>
        <name>UDP-N-acetyl-alpha-D-glucosamine</name>
        <dbReference type="ChEBI" id="CHEBI:57705"/>
    </ligand>
</feature>
<feature type="binding site" evidence="2">
    <location>
        <position position="540"/>
    </location>
    <ligand>
        <name>UDP-N-acetyl-alpha-D-glucosamine</name>
        <dbReference type="ChEBI" id="CHEBI:57705"/>
    </ligand>
</feature>
<feature type="binding site" evidence="2">
    <location>
        <position position="556"/>
    </location>
    <ligand>
        <name>UDP-N-acetyl-alpha-D-glucosamine</name>
        <dbReference type="ChEBI" id="CHEBI:57705"/>
    </ligand>
</feature>
<feature type="binding site" evidence="2">
    <location>
        <position position="557"/>
    </location>
    <ligand>
        <name>UDP-N-acetyl-alpha-D-glucosamine</name>
        <dbReference type="ChEBI" id="CHEBI:57705"/>
    </ligand>
</feature>
<feature type="binding site" evidence="2">
    <location>
        <position position="558"/>
    </location>
    <ligand>
        <name>Mn(2+)</name>
        <dbReference type="ChEBI" id="CHEBI:29035"/>
        <note>catalytic</note>
    </ligand>
</feature>
<feature type="binding site" evidence="2">
    <location>
        <position position="558"/>
    </location>
    <ligand>
        <name>UDP-N-acetyl-alpha-D-glucosamine</name>
        <dbReference type="ChEBI" id="CHEBI:57705"/>
    </ligand>
</feature>
<feature type="binding site" evidence="2">
    <location>
        <position position="644"/>
    </location>
    <ligand>
        <name>UDP-N-acetyl-alpha-D-glucosamine</name>
        <dbReference type="ChEBI" id="CHEBI:57705"/>
    </ligand>
</feature>
<feature type="binding site" evidence="2">
    <location>
        <position position="645"/>
    </location>
    <ligand>
        <name>UDP-N-acetyl-alpha-D-glucosamine</name>
        <dbReference type="ChEBI" id="CHEBI:57705"/>
    </ligand>
</feature>
<feature type="binding site" evidence="2">
    <location>
        <position position="692"/>
    </location>
    <ligand>
        <name>UDP-N-acetyl-alpha-D-glucosamine</name>
        <dbReference type="ChEBI" id="CHEBI:57705"/>
    </ligand>
</feature>
<feature type="glycosylation site" description="N-linked (GlcNAc...) asparagine" evidence="3">
    <location>
        <position position="194"/>
    </location>
</feature>
<feature type="glycosylation site" description="N-linked (GlcNAc...) asparagine" evidence="3">
    <location>
        <position position="322"/>
    </location>
</feature>
<feature type="disulfide bond" evidence="2">
    <location>
        <begin position="643"/>
        <end position="695"/>
    </location>
</feature>
<dbReference type="EC" id="2.4.1.224"/>
<dbReference type="EC" id="2.4.1.225"/>
<dbReference type="EMBL" id="AY734457">
    <property type="protein sequence ID" value="AAW29035.1"/>
    <property type="molecule type" value="mRNA"/>
</dbReference>
<dbReference type="SMR" id="Q5IGR6"/>
<dbReference type="FunCoup" id="Q5IGR6">
    <property type="interactions" value="287"/>
</dbReference>
<dbReference type="STRING" id="7955.ENSDARP00000123497"/>
<dbReference type="CAZy" id="GT47">
    <property type="family name" value="Glycosyltransferase Family 47"/>
</dbReference>
<dbReference type="CAZy" id="GT64">
    <property type="family name" value="Glycosyltransferase Family 64"/>
</dbReference>
<dbReference type="GlyCosmos" id="Q5IGR6">
    <property type="glycosylation" value="2 sites, No reported glycans"/>
</dbReference>
<dbReference type="PaxDb" id="7955-ENSDARP00000051693"/>
<dbReference type="AGR" id="ZFIN:ZDB-GENE-050211-5"/>
<dbReference type="ZFIN" id="ZDB-GENE-050211-5">
    <property type="gene designation" value="ext1c"/>
</dbReference>
<dbReference type="eggNOG" id="KOG1021">
    <property type="taxonomic scope" value="Eukaryota"/>
</dbReference>
<dbReference type="InParanoid" id="Q5IGR6"/>
<dbReference type="PhylomeDB" id="Q5IGR6"/>
<dbReference type="UniPathway" id="UPA00378"/>
<dbReference type="PRO" id="PR:Q5IGR6"/>
<dbReference type="Proteomes" id="UP000000437">
    <property type="component" value="Unplaced"/>
</dbReference>
<dbReference type="GO" id="GO:0005789">
    <property type="term" value="C:endoplasmic reticulum membrane"/>
    <property type="evidence" value="ECO:0000250"/>
    <property type="project" value="UniProtKB"/>
</dbReference>
<dbReference type="GO" id="GO:0005794">
    <property type="term" value="C:Golgi apparatus"/>
    <property type="evidence" value="ECO:0000318"/>
    <property type="project" value="GO_Central"/>
</dbReference>
<dbReference type="GO" id="GO:0008375">
    <property type="term" value="F:acetylglucosaminyltransferase activity"/>
    <property type="evidence" value="ECO:0000318"/>
    <property type="project" value="GO_Central"/>
</dbReference>
<dbReference type="GO" id="GO:0050508">
    <property type="term" value="F:glucuronosyl-N-acetylglucosaminyl-proteoglycan 4-alpha-N-acetylglucosaminyltransferase activity"/>
    <property type="evidence" value="ECO:0000250"/>
    <property type="project" value="UniProtKB"/>
</dbReference>
<dbReference type="GO" id="GO:0015020">
    <property type="term" value="F:glucuronosyltransferase activity"/>
    <property type="evidence" value="ECO:0000318"/>
    <property type="project" value="GO_Central"/>
</dbReference>
<dbReference type="GO" id="GO:0046872">
    <property type="term" value="F:metal ion binding"/>
    <property type="evidence" value="ECO:0007669"/>
    <property type="project" value="UniProtKB-KW"/>
</dbReference>
<dbReference type="GO" id="GO:0050509">
    <property type="term" value="F:N-acetylglucosaminyl-proteoglycan 4-beta-glucuronosyltransferase activity"/>
    <property type="evidence" value="ECO:0000250"/>
    <property type="project" value="UniProtKB"/>
</dbReference>
<dbReference type="GO" id="GO:0015012">
    <property type="term" value="P:heparan sulfate proteoglycan biosynthetic process"/>
    <property type="evidence" value="ECO:0000250"/>
    <property type="project" value="UniProtKB"/>
</dbReference>
<dbReference type="GO" id="GO:0006486">
    <property type="term" value="P:protein glycosylation"/>
    <property type="evidence" value="ECO:0007669"/>
    <property type="project" value="UniProtKB-UniPathway"/>
</dbReference>
<dbReference type="FunFam" id="3.90.550.10:FF:000034">
    <property type="entry name" value="Exostosin 1"/>
    <property type="match status" value="1"/>
</dbReference>
<dbReference type="Gene3D" id="3.90.550.10">
    <property type="entry name" value="Spore Coat Polysaccharide Biosynthesis Protein SpsA, Chain A"/>
    <property type="match status" value="1"/>
</dbReference>
<dbReference type="InterPro" id="IPR004263">
    <property type="entry name" value="Exostosin"/>
</dbReference>
<dbReference type="InterPro" id="IPR040911">
    <property type="entry name" value="Exostosin_GT47"/>
</dbReference>
<dbReference type="InterPro" id="IPR015338">
    <property type="entry name" value="GT64_dom"/>
</dbReference>
<dbReference type="InterPro" id="IPR029044">
    <property type="entry name" value="Nucleotide-diphossugar_trans"/>
</dbReference>
<dbReference type="PANTHER" id="PTHR48261">
    <property type="entry name" value="ACETYLGLUCOSAMINYLTRANSFERASE"/>
    <property type="match status" value="1"/>
</dbReference>
<dbReference type="PANTHER" id="PTHR48261:SF3">
    <property type="entry name" value="EXOSTOSIN GLYCOSYLTRANSFERASE 1"/>
    <property type="match status" value="1"/>
</dbReference>
<dbReference type="Pfam" id="PF03016">
    <property type="entry name" value="Exostosin_GT47"/>
    <property type="match status" value="1"/>
</dbReference>
<dbReference type="Pfam" id="PF09258">
    <property type="entry name" value="Glyco_transf_64"/>
    <property type="match status" value="1"/>
</dbReference>
<dbReference type="SUPFAM" id="SSF53448">
    <property type="entry name" value="Nucleotide-diphospho-sugar transferases"/>
    <property type="match status" value="1"/>
</dbReference>
<keyword id="KW-1015">Disulfide bond</keyword>
<keyword id="KW-0256">Endoplasmic reticulum</keyword>
<keyword id="KW-0325">Glycoprotein</keyword>
<keyword id="KW-0328">Glycosyltransferase</keyword>
<keyword id="KW-0464">Manganese</keyword>
<keyword id="KW-0472">Membrane</keyword>
<keyword id="KW-0479">Metal-binding</keyword>
<keyword id="KW-1185">Reference proteome</keyword>
<keyword id="KW-0735">Signal-anchor</keyword>
<keyword id="KW-0808">Transferase</keyword>
<keyword id="KW-0812">Transmembrane</keyword>
<keyword id="KW-1133">Transmembrane helix</keyword>
<proteinExistence type="evidence at transcript level"/>
<reference key="1">
    <citation type="journal article" date="2005" name="Dev. Dyn.">
        <title>Distinct tissue-specificity of three zebrafish ext1 genes encoding proteoglycan modifying enzymes and their relationship to somitic Sonic hedgehog signaling.</title>
        <authorList>
            <person name="Siekmann A.F."/>
            <person name="Brand M."/>
        </authorList>
    </citation>
    <scope>NUCLEOTIDE SEQUENCE [MRNA]</scope>
    <scope>DEVELOPMENTAL STAGE</scope>
</reference>
<gene>
    <name type="primary">ext1c</name>
</gene>
<sequence>MQARKKYVLLGLCTCCWILLYYWAGLQERLLGLITHRRGEVPRPWPDWLDRALLPNFAEQLDLQNGGGPGDSPRQRKQAWSSIYKDSRCRMDTCFDFGRCQTQSGFRVYIYPPEKGERVSEGYRKILTSVSESRYYTSDPREACLFVLGIDTLDRDQLSQQFVPNVDERIRGYPLWNDGRNHVIFNLYSGTWPNYTEDLGFNVGQAILAKASLNTEHFRPGFDISIPLFSKEHPQKGGKRGWLVRNSVPPRRKYLLMFKGKRYLTGIGSDTRNALHHIHNGKDIVSLTTCRHGKDWEKHKDARCDHDNQEYERFDYQELLHNSTFCLVPRGRRLGSFRFLESLQAACIPVLLSNGWELPFSDVIQWNQAVVEGDERLLLQVPSTVRAVGIDRVLALRQQTQTLWDAYFSSVDKIVLTTLEIIKDRVYSHISRNKLMWNALPGGLLVLPEFSTHLAHYPFYYLHLGISPGLEFTAVIHATSPLVSQSQPIMKLLQVVSKSKYCSQIIILWNSEKSPPQRSKWPPMPVPLTVTDGRRKTSSRFLPHAAIETEAVLSLDEDTVLLTSEINFAFHVWRSFPDRIVGYPPRSHFWDPVKKAWGYTSKWTNEYSIILTGAAFYHRYYHHLFSHYLPSSLRALVDHSCNCEDILMNFLVSSVAHLPPVKVAQRKQYKEMPSLQGTKMAPWANPEHFTQRQECVNTFSSWFGYMPLEHSQFRLDPVLFKDHVSVLRKRYKDLERV</sequence>
<evidence type="ECO:0000250" key="1"/>
<evidence type="ECO:0000250" key="2">
    <source>
        <dbReference type="UniProtKB" id="Q9ES89"/>
    </source>
</evidence>
<evidence type="ECO:0000255" key="3"/>
<evidence type="ECO:0000269" key="4">
    <source>
    </source>
</evidence>
<evidence type="ECO:0000305" key="5"/>
<accession>Q5IGR6</accession>
<organism>
    <name type="scientific">Danio rerio</name>
    <name type="common">Zebrafish</name>
    <name type="synonym">Brachydanio rerio</name>
    <dbReference type="NCBI Taxonomy" id="7955"/>
    <lineage>
        <taxon>Eukaryota</taxon>
        <taxon>Metazoa</taxon>
        <taxon>Chordata</taxon>
        <taxon>Craniata</taxon>
        <taxon>Vertebrata</taxon>
        <taxon>Euteleostomi</taxon>
        <taxon>Actinopterygii</taxon>
        <taxon>Neopterygii</taxon>
        <taxon>Teleostei</taxon>
        <taxon>Ostariophysi</taxon>
        <taxon>Cypriniformes</taxon>
        <taxon>Danionidae</taxon>
        <taxon>Danioninae</taxon>
        <taxon>Danio</taxon>
    </lineage>
</organism>
<protein>
    <recommendedName>
        <fullName>Exostosin-1c</fullName>
        <ecNumber>2.4.1.224</ecNumber>
        <ecNumber>2.4.1.225</ecNumber>
    </recommendedName>
    <alternativeName>
        <fullName>Glucuronosyl-N-acetylglucosaminyl-proteoglycan/N-acetylglucosaminyl-proteoglycan 4-alpha-N-acetylglucosaminyltransferase 1c</fullName>
    </alternativeName>
    <alternativeName>
        <fullName>Multiple exostoses protein 1 homolog c</fullName>
    </alternativeName>
</protein>
<name>EXT1C_DANRE</name>